<keyword id="KW-0574">Periplasm</keyword>
<keyword id="KW-0732">Signal</keyword>
<reference key="1">
    <citation type="submission" date="2009-07" db="EMBL/GenBank/DDBJ databases">
        <title>Complete sequence of Pectobacterium carotovorum subsp. carotovorum PC1.</title>
        <authorList>
            <consortium name="US DOE Joint Genome Institute"/>
            <person name="Lucas S."/>
            <person name="Copeland A."/>
            <person name="Lapidus A."/>
            <person name="Glavina del Rio T."/>
            <person name="Tice H."/>
            <person name="Bruce D."/>
            <person name="Goodwin L."/>
            <person name="Pitluck S."/>
            <person name="Munk A.C."/>
            <person name="Brettin T."/>
            <person name="Detter J.C."/>
            <person name="Han C."/>
            <person name="Tapia R."/>
            <person name="Larimer F."/>
            <person name="Land M."/>
            <person name="Hauser L."/>
            <person name="Kyrpides N."/>
            <person name="Mikhailova N."/>
            <person name="Balakrishnan V."/>
            <person name="Glasner J."/>
            <person name="Perna N.T."/>
        </authorList>
    </citation>
    <scope>NUCLEOTIDE SEQUENCE [LARGE SCALE GENOMIC DNA]</scope>
    <source>
        <strain>PC1</strain>
    </source>
</reference>
<name>Y2518_PECCP</name>
<organism>
    <name type="scientific">Pectobacterium carotovorum subsp. carotovorum (strain PC1)</name>
    <dbReference type="NCBI Taxonomy" id="561230"/>
    <lineage>
        <taxon>Bacteria</taxon>
        <taxon>Pseudomonadati</taxon>
        <taxon>Pseudomonadota</taxon>
        <taxon>Gammaproteobacteria</taxon>
        <taxon>Enterobacterales</taxon>
        <taxon>Pectobacteriaceae</taxon>
        <taxon>Pectobacterium</taxon>
    </lineage>
</organism>
<protein>
    <recommendedName>
        <fullName evidence="1">UPF0312 protein PC1_2518</fullName>
    </recommendedName>
</protein>
<sequence>MLKKTLLSLTAVSMLASAGSALAAEYKFDKEGQHAFIEFRIKHLGYSWLYGSFNDFDGAFTFDEKNPSADKVNVTINTNSVDTNHAERDKHLRSAEFLNVTKHPQATFTSTEVKKDGEDYDITGNLTLNGVTKPVKLDAKLIGQGDDPWGNYRAGFQAEGTIKLKDFNITTDLGPASQEVELIIAVEGVRQK</sequence>
<evidence type="ECO:0000255" key="1">
    <source>
        <dbReference type="HAMAP-Rule" id="MF_00780"/>
    </source>
</evidence>
<proteinExistence type="inferred from homology"/>
<dbReference type="EMBL" id="CP001657">
    <property type="protein sequence ID" value="ACT13549.1"/>
    <property type="molecule type" value="Genomic_DNA"/>
</dbReference>
<dbReference type="SMR" id="C6DKU8"/>
<dbReference type="STRING" id="561230.PC1_2518"/>
<dbReference type="KEGG" id="pct:PC1_2518"/>
<dbReference type="eggNOG" id="COG2353">
    <property type="taxonomic scope" value="Bacteria"/>
</dbReference>
<dbReference type="HOGENOM" id="CLU_071003_1_2_6"/>
<dbReference type="Proteomes" id="UP000002736">
    <property type="component" value="Chromosome"/>
</dbReference>
<dbReference type="GO" id="GO:0042597">
    <property type="term" value="C:periplasmic space"/>
    <property type="evidence" value="ECO:0007669"/>
    <property type="project" value="UniProtKB-SubCell"/>
</dbReference>
<dbReference type="Gene3D" id="2.40.128.110">
    <property type="entry name" value="Lipid/polyisoprenoid-binding, YceI-like"/>
    <property type="match status" value="1"/>
</dbReference>
<dbReference type="HAMAP" id="MF_00780">
    <property type="entry name" value="UPF0312"/>
    <property type="match status" value="1"/>
</dbReference>
<dbReference type="InterPro" id="IPR007372">
    <property type="entry name" value="Lipid/polyisoprenoid-bd_YceI"/>
</dbReference>
<dbReference type="InterPro" id="IPR036761">
    <property type="entry name" value="TTHA0802/YceI-like_sf"/>
</dbReference>
<dbReference type="InterPro" id="IPR023480">
    <property type="entry name" value="UPF0312/YceI"/>
</dbReference>
<dbReference type="NCBIfam" id="NF002994">
    <property type="entry name" value="PRK03757.1"/>
    <property type="match status" value="1"/>
</dbReference>
<dbReference type="PANTHER" id="PTHR34406">
    <property type="entry name" value="PROTEIN YCEI"/>
    <property type="match status" value="1"/>
</dbReference>
<dbReference type="PANTHER" id="PTHR34406:SF1">
    <property type="entry name" value="PROTEIN YCEI"/>
    <property type="match status" value="1"/>
</dbReference>
<dbReference type="Pfam" id="PF04264">
    <property type="entry name" value="YceI"/>
    <property type="match status" value="1"/>
</dbReference>
<dbReference type="SMART" id="SM00867">
    <property type="entry name" value="YceI"/>
    <property type="match status" value="1"/>
</dbReference>
<dbReference type="SUPFAM" id="SSF101874">
    <property type="entry name" value="YceI-like"/>
    <property type="match status" value="1"/>
</dbReference>
<feature type="signal peptide" evidence="1">
    <location>
        <begin position="1"/>
        <end position="23"/>
    </location>
</feature>
<feature type="chain" id="PRO_5000486485" description="UPF0312 protein PC1_2518">
    <location>
        <begin position="24"/>
        <end position="192"/>
    </location>
</feature>
<comment type="subcellular location">
    <subcellularLocation>
        <location evidence="1">Periplasm</location>
    </subcellularLocation>
</comment>
<comment type="similarity">
    <text evidence="1">Belongs to the UPF0312 family. Type 1 subfamily.</text>
</comment>
<accession>C6DKU8</accession>
<gene>
    <name type="ordered locus">PC1_2518</name>
</gene>